<keyword id="KW-0325">Glycoprotein</keyword>
<keyword id="KW-0732">Signal</keyword>
<sequence length="137" mass="15984">MLVIILGIIGLLASSNLVSSSTSTRVGGHLPLTFDPPENELGYWCTYVESCRFCWDCEDGICTSRVWGNNSTSIVENDYVKYCEVSRWGNLCRYDVEEHIYYSMNCSDPKPWNPYKIARKEWKKNEYLRKDLKKDEF</sequence>
<feature type="signal peptide" evidence="2">
    <location>
        <begin position="1"/>
        <end position="20"/>
    </location>
</feature>
<feature type="chain" id="PRO_0000373206" description="Protein MGF 110-7L">
    <location>
        <begin position="21"/>
        <end position="137"/>
    </location>
</feature>
<feature type="glycosylation site" description="N-linked (GlcNAc...) asparagine; by host" evidence="2">
    <location>
        <position position="69"/>
    </location>
</feature>
<feature type="glycosylation site" description="N-linked (GlcNAc...) asparagine; by host" evidence="2">
    <location>
        <position position="70"/>
    </location>
</feature>
<feature type="glycosylation site" description="N-linked (GlcNAc...) asparagine; by host" evidence="2">
    <location>
        <position position="105"/>
    </location>
</feature>
<protein>
    <recommendedName>
        <fullName>Protein MGF 110-7L</fullName>
    </recommendedName>
</protein>
<dbReference type="EMBL" id="AY261363">
    <property type="status" value="NOT_ANNOTATED_CDS"/>
    <property type="molecule type" value="Genomic_DNA"/>
</dbReference>
<dbReference type="Proteomes" id="UP000000859">
    <property type="component" value="Segment"/>
</dbReference>
<dbReference type="InterPro" id="IPR004848">
    <property type="entry name" value="ASFV_fam_110"/>
</dbReference>
<dbReference type="Pfam" id="PF01639">
    <property type="entry name" value="v110"/>
    <property type="match status" value="1"/>
</dbReference>
<evidence type="ECO:0000250" key="1"/>
<evidence type="ECO:0000255" key="2"/>
<evidence type="ECO:0000305" key="3"/>
<proteinExistence type="inferred from homology"/>
<organism>
    <name type="scientific">African swine fever virus (isolate Tick/South Africa/Pretoriuskop Pr4/1996)</name>
    <name type="common">ASFV</name>
    <dbReference type="NCBI Taxonomy" id="561443"/>
    <lineage>
        <taxon>Viruses</taxon>
        <taxon>Varidnaviria</taxon>
        <taxon>Bamfordvirae</taxon>
        <taxon>Nucleocytoviricota</taxon>
        <taxon>Pokkesviricetes</taxon>
        <taxon>Asfuvirales</taxon>
        <taxon>Asfarviridae</taxon>
        <taxon>Asfivirus</taxon>
        <taxon>African swine fever virus</taxon>
    </lineage>
</organism>
<accession>P0C9I4</accession>
<comment type="function">
    <text evidence="1">Plays a role in virus cell tropism, and may be required for efficient virus replication in macrophages.</text>
</comment>
<comment type="similarity">
    <text evidence="3">Belongs to the asfivirus MGF 110 family.</text>
</comment>
<reference key="1">
    <citation type="submission" date="2003-03" db="EMBL/GenBank/DDBJ databases">
        <title>African swine fever virus genomes.</title>
        <authorList>
            <person name="Kutish G.F."/>
            <person name="Rock D.L."/>
        </authorList>
    </citation>
    <scope>NUCLEOTIDE SEQUENCE [LARGE SCALE GENOMIC DNA]</scope>
</reference>
<organismHost>
    <name type="scientific">Ornithodoros</name>
    <name type="common">relapsing fever ticks</name>
    <dbReference type="NCBI Taxonomy" id="6937"/>
</organismHost>
<organismHost>
    <name type="scientific">Phacochoerus aethiopicus</name>
    <name type="common">Warthog</name>
    <dbReference type="NCBI Taxonomy" id="85517"/>
</organismHost>
<organismHost>
    <name type="scientific">Phacochoerus africanus</name>
    <name type="common">Warthog</name>
    <dbReference type="NCBI Taxonomy" id="41426"/>
</organismHost>
<organismHost>
    <name type="scientific">Potamochoerus larvatus</name>
    <name type="common">Bushpig</name>
    <dbReference type="NCBI Taxonomy" id="273792"/>
</organismHost>
<organismHost>
    <name type="scientific">Sus scrofa</name>
    <name type="common">Pig</name>
    <dbReference type="NCBI Taxonomy" id="9823"/>
</organismHost>
<name>1107L_ASFP4</name>
<gene>
    <name type="ordered locus">Pret-017</name>
</gene>